<accession>Q6UWP8</accession>
<accession>A8K5J0</accession>
<accession>E9PBV3</accession>
<keyword id="KW-0025">Alternative splicing</keyword>
<keyword id="KW-1267">Proteomics identification</keyword>
<keyword id="KW-1185">Reference proteome</keyword>
<keyword id="KW-0964">Secreted</keyword>
<keyword id="KW-0732">Signal</keyword>
<proteinExistence type="evidence at protein level"/>
<dbReference type="EMBL" id="AY358701">
    <property type="protein sequence ID" value="AAQ89064.1"/>
    <property type="molecule type" value="mRNA"/>
</dbReference>
<dbReference type="EMBL" id="AK291305">
    <property type="protein sequence ID" value="BAF83994.1"/>
    <property type="molecule type" value="mRNA"/>
</dbReference>
<dbReference type="EMBL" id="BX648076">
    <property type="status" value="NOT_ANNOTATED_CDS"/>
    <property type="molecule type" value="mRNA"/>
</dbReference>
<dbReference type="EMBL" id="AC002389">
    <property type="status" value="NOT_ANNOTATED_CDS"/>
    <property type="molecule type" value="Genomic_DNA"/>
</dbReference>
<dbReference type="EMBL" id="BC063640">
    <property type="protein sequence ID" value="AAH63640.1"/>
    <property type="molecule type" value="mRNA"/>
</dbReference>
<dbReference type="CCDS" id="CCDS12464.1">
    <molecule id="Q6UWP8-2"/>
</dbReference>
<dbReference type="CCDS" id="CCDS54253.1">
    <molecule id="Q6UWP8-1"/>
</dbReference>
<dbReference type="RefSeq" id="NP_001159506.1">
    <molecule id="Q6UWP8-1"/>
    <property type="nucleotide sequence ID" value="NM_001166034.2"/>
</dbReference>
<dbReference type="RefSeq" id="NP_001159507.1">
    <property type="nucleotide sequence ID" value="NM_001166035.1"/>
</dbReference>
<dbReference type="RefSeq" id="NP_940940.1">
    <molecule id="Q6UWP8-2"/>
    <property type="nucleotide sequence ID" value="NM_198538.4"/>
</dbReference>
<dbReference type="RefSeq" id="XP_054176900.1">
    <molecule id="Q6UWP8-2"/>
    <property type="nucleotide sequence ID" value="XM_054320925.1"/>
</dbReference>
<dbReference type="BioGRID" id="131933">
    <property type="interactions" value="151"/>
</dbReference>
<dbReference type="FunCoup" id="Q6UWP8">
    <property type="interactions" value="393"/>
</dbReference>
<dbReference type="IntAct" id="Q6UWP8">
    <property type="interactions" value="90"/>
</dbReference>
<dbReference type="MINT" id="Q6UWP8"/>
<dbReference type="STRING" id="9606.ENSP00000430242"/>
<dbReference type="GlyGen" id="Q6UWP8">
    <property type="glycosylation" value="3 sites, 2 O-linked glycans (3 sites)"/>
</dbReference>
<dbReference type="iPTMnet" id="Q6UWP8"/>
<dbReference type="PhosphoSitePlus" id="Q6UWP8"/>
<dbReference type="SwissPalm" id="Q6UWP8"/>
<dbReference type="BioMuta" id="SBSN"/>
<dbReference type="DMDM" id="449081282"/>
<dbReference type="jPOST" id="Q6UWP8"/>
<dbReference type="MassIVE" id="Q6UWP8"/>
<dbReference type="PaxDb" id="9606-ENSP00000430242"/>
<dbReference type="PeptideAtlas" id="Q6UWP8"/>
<dbReference type="ProteomicsDB" id="19302"/>
<dbReference type="ProteomicsDB" id="67511">
    <molecule id="Q6UWP8-1"/>
</dbReference>
<dbReference type="Pumba" id="Q6UWP8"/>
<dbReference type="Antibodypedia" id="54088">
    <property type="antibodies" value="108 antibodies from 17 providers"/>
</dbReference>
<dbReference type="DNASU" id="374897"/>
<dbReference type="Ensembl" id="ENST00000452271.7">
    <molecule id="Q6UWP8-1"/>
    <property type="protein sequence ID" value="ENSP00000430242.1"/>
    <property type="gene ID" value="ENSG00000189001.11"/>
</dbReference>
<dbReference type="Ensembl" id="ENST00000518157.1">
    <molecule id="Q6UWP8-2"/>
    <property type="protein sequence ID" value="ENSP00000428771.1"/>
    <property type="gene ID" value="ENSG00000189001.11"/>
</dbReference>
<dbReference type="GeneID" id="374897"/>
<dbReference type="KEGG" id="hsa:374897"/>
<dbReference type="MANE-Select" id="ENST00000452271.7">
    <property type="protein sequence ID" value="ENSP00000430242.1"/>
    <property type="RefSeq nucleotide sequence ID" value="NM_001166034.2"/>
    <property type="RefSeq protein sequence ID" value="NP_001159506.1"/>
</dbReference>
<dbReference type="UCSC" id="uc002oad.3">
    <molecule id="Q6UWP8-1"/>
    <property type="organism name" value="human"/>
</dbReference>
<dbReference type="AGR" id="HGNC:24950"/>
<dbReference type="CTD" id="374897"/>
<dbReference type="DisGeNET" id="374897"/>
<dbReference type="GeneCards" id="SBSN"/>
<dbReference type="HGNC" id="HGNC:24950">
    <property type="gene designation" value="SBSN"/>
</dbReference>
<dbReference type="HPA" id="ENSG00000189001">
    <property type="expression patterns" value="Tissue enhanced (esophagus, skin, vagina)"/>
</dbReference>
<dbReference type="MIM" id="609969">
    <property type="type" value="gene"/>
</dbReference>
<dbReference type="neXtProt" id="NX_Q6UWP8"/>
<dbReference type="OpenTargets" id="ENSG00000189001"/>
<dbReference type="PharmGKB" id="PA144596385"/>
<dbReference type="VEuPathDB" id="HostDB:ENSG00000189001"/>
<dbReference type="eggNOG" id="ENOG502SGZY">
    <property type="taxonomic scope" value="Eukaryota"/>
</dbReference>
<dbReference type="GeneTree" id="ENSGT00440000039148"/>
<dbReference type="HOGENOM" id="CLU_033163_0_0_1"/>
<dbReference type="InParanoid" id="Q6UWP8"/>
<dbReference type="OMA" id="THHAFGQ"/>
<dbReference type="OrthoDB" id="9836354at2759"/>
<dbReference type="PAN-GO" id="Q6UWP8">
    <property type="GO annotations" value="0 GO annotations based on evolutionary models"/>
</dbReference>
<dbReference type="PhylomeDB" id="Q6UWP8"/>
<dbReference type="TreeFam" id="TF351767"/>
<dbReference type="PathwayCommons" id="Q6UWP8"/>
<dbReference type="Reactome" id="R-HSA-9725554">
    <property type="pathway name" value="Differentiation of Keratinocytes in Interfollicular Epidermis in Mammalian Skin"/>
</dbReference>
<dbReference type="SignaLink" id="Q6UWP8"/>
<dbReference type="BioGRID-ORCS" id="374897">
    <property type="hits" value="8 hits in 1142 CRISPR screens"/>
</dbReference>
<dbReference type="CD-CODE" id="232F8A39">
    <property type="entry name" value="P-body"/>
</dbReference>
<dbReference type="ChiTaRS" id="SBSN">
    <property type="organism name" value="human"/>
</dbReference>
<dbReference type="GenomeRNAi" id="374897"/>
<dbReference type="Pharos" id="Q6UWP8">
    <property type="development level" value="Tbio"/>
</dbReference>
<dbReference type="PRO" id="PR:Q6UWP8"/>
<dbReference type="Proteomes" id="UP000005640">
    <property type="component" value="Chromosome 19"/>
</dbReference>
<dbReference type="RNAct" id="Q6UWP8">
    <property type="molecule type" value="protein"/>
</dbReference>
<dbReference type="Bgee" id="ENSG00000189001">
    <property type="expression patterns" value="Expressed in upper arm skin and 103 other cell types or tissues"/>
</dbReference>
<dbReference type="ExpressionAtlas" id="Q6UWP8">
    <property type="expression patterns" value="baseline and differential"/>
</dbReference>
<dbReference type="GO" id="GO:0070062">
    <property type="term" value="C:extracellular exosome"/>
    <property type="evidence" value="ECO:0007005"/>
    <property type="project" value="UniProtKB"/>
</dbReference>
<dbReference type="InterPro" id="IPR049502">
    <property type="entry name" value="SBSN_GxHH_rpt"/>
</dbReference>
<dbReference type="InterPro" id="IPR024153">
    <property type="entry name" value="Suprabasin"/>
</dbReference>
<dbReference type="PANTHER" id="PTHR23243">
    <property type="entry name" value="SUPRABASAL-SPECIFIC PROTEIN SUPRABASIN"/>
    <property type="match status" value="1"/>
</dbReference>
<dbReference type="PANTHER" id="PTHR23243:SF3">
    <property type="entry name" value="SUPRABASIN"/>
    <property type="match status" value="1"/>
</dbReference>
<dbReference type="Pfam" id="PF21009">
    <property type="entry name" value="SBSN_GxHH_rpt"/>
    <property type="match status" value="3"/>
</dbReference>
<comment type="interaction">
    <interactant intactId="EBI-18282351">
        <id>Q6UWP8-2</id>
    </interactant>
    <interactant intactId="EBI-749635">
        <id>P61601</id>
        <label>NCALD</label>
    </interactant>
    <organismsDiffer>false</organismsDiffer>
    <experiments>3</experiments>
</comment>
<comment type="subcellular location">
    <subcellularLocation>
        <location evidence="1">Secreted</location>
    </subcellularLocation>
</comment>
<comment type="alternative products">
    <event type="alternative splicing"/>
    <isoform>
        <id>Q6UWP8-1</id>
        <name>1</name>
        <sequence type="displayed"/>
    </isoform>
    <isoform>
        <id>Q6UWP8-2</id>
        <name>2</name>
        <sequence type="described" ref="VSP_044973"/>
    </isoform>
</comment>
<comment type="tissue specificity">
    <text evidence="4">Detected in thymus, uterus and esophagus.</text>
</comment>
<comment type="induction">
    <text evidence="4">Up-regulated in differentiating keratinocytes.</text>
</comment>
<gene>
    <name type="primary">SBSN</name>
    <name type="ORF">UNQ698/PRO1343</name>
</gene>
<protein>
    <recommendedName>
        <fullName>Suprabasin</fullName>
    </recommendedName>
</protein>
<reference key="1">
    <citation type="journal article" date="2003" name="Genome Res.">
        <title>The secreted protein discovery initiative (SPDI), a large-scale effort to identify novel human secreted and transmembrane proteins: a bioinformatics assessment.</title>
        <authorList>
            <person name="Clark H.F."/>
            <person name="Gurney A.L."/>
            <person name="Abaya E."/>
            <person name="Baker K."/>
            <person name="Baldwin D.T."/>
            <person name="Brush J."/>
            <person name="Chen J."/>
            <person name="Chow B."/>
            <person name="Chui C."/>
            <person name="Crowley C."/>
            <person name="Currell B."/>
            <person name="Deuel B."/>
            <person name="Dowd P."/>
            <person name="Eaton D."/>
            <person name="Foster J.S."/>
            <person name="Grimaldi C."/>
            <person name="Gu Q."/>
            <person name="Hass P.E."/>
            <person name="Heldens S."/>
            <person name="Huang A."/>
            <person name="Kim H.S."/>
            <person name="Klimowski L."/>
            <person name="Jin Y."/>
            <person name="Johnson S."/>
            <person name="Lee J."/>
            <person name="Lewis L."/>
            <person name="Liao D."/>
            <person name="Mark M.R."/>
            <person name="Robbie E."/>
            <person name="Sanchez C."/>
            <person name="Schoenfeld J."/>
            <person name="Seshagiri S."/>
            <person name="Simmons L."/>
            <person name="Singh J."/>
            <person name="Smith V."/>
            <person name="Stinson J."/>
            <person name="Vagts A."/>
            <person name="Vandlen R.L."/>
            <person name="Watanabe C."/>
            <person name="Wieand D."/>
            <person name="Woods K."/>
            <person name="Xie M.-H."/>
            <person name="Yansura D.G."/>
            <person name="Yi S."/>
            <person name="Yu G."/>
            <person name="Yuan J."/>
            <person name="Zhang M."/>
            <person name="Zhang Z."/>
            <person name="Goddard A.D."/>
            <person name="Wood W.I."/>
            <person name="Godowski P.J."/>
            <person name="Gray A.M."/>
        </authorList>
    </citation>
    <scope>NUCLEOTIDE SEQUENCE [LARGE SCALE MRNA] (ISOFORM 2)</scope>
</reference>
<reference key="2">
    <citation type="journal article" date="2004" name="Nat. Genet.">
        <title>Complete sequencing and characterization of 21,243 full-length human cDNAs.</title>
        <authorList>
            <person name="Ota T."/>
            <person name="Suzuki Y."/>
            <person name="Nishikawa T."/>
            <person name="Otsuki T."/>
            <person name="Sugiyama T."/>
            <person name="Irie R."/>
            <person name="Wakamatsu A."/>
            <person name="Hayashi K."/>
            <person name="Sato H."/>
            <person name="Nagai K."/>
            <person name="Kimura K."/>
            <person name="Makita H."/>
            <person name="Sekine M."/>
            <person name="Obayashi M."/>
            <person name="Nishi T."/>
            <person name="Shibahara T."/>
            <person name="Tanaka T."/>
            <person name="Ishii S."/>
            <person name="Yamamoto J."/>
            <person name="Saito K."/>
            <person name="Kawai Y."/>
            <person name="Isono Y."/>
            <person name="Nakamura Y."/>
            <person name="Nagahari K."/>
            <person name="Murakami K."/>
            <person name="Yasuda T."/>
            <person name="Iwayanagi T."/>
            <person name="Wagatsuma M."/>
            <person name="Shiratori A."/>
            <person name="Sudo H."/>
            <person name="Hosoiri T."/>
            <person name="Kaku Y."/>
            <person name="Kodaira H."/>
            <person name="Kondo H."/>
            <person name="Sugawara M."/>
            <person name="Takahashi M."/>
            <person name="Kanda K."/>
            <person name="Yokoi T."/>
            <person name="Furuya T."/>
            <person name="Kikkawa E."/>
            <person name="Omura Y."/>
            <person name="Abe K."/>
            <person name="Kamihara K."/>
            <person name="Katsuta N."/>
            <person name="Sato K."/>
            <person name="Tanikawa M."/>
            <person name="Yamazaki M."/>
            <person name="Ninomiya K."/>
            <person name="Ishibashi T."/>
            <person name="Yamashita H."/>
            <person name="Murakawa K."/>
            <person name="Fujimori K."/>
            <person name="Tanai H."/>
            <person name="Kimata M."/>
            <person name="Watanabe M."/>
            <person name="Hiraoka S."/>
            <person name="Chiba Y."/>
            <person name="Ishida S."/>
            <person name="Ono Y."/>
            <person name="Takiguchi S."/>
            <person name="Watanabe S."/>
            <person name="Yosida M."/>
            <person name="Hotuta T."/>
            <person name="Kusano J."/>
            <person name="Kanehori K."/>
            <person name="Takahashi-Fujii A."/>
            <person name="Hara H."/>
            <person name="Tanase T.-O."/>
            <person name="Nomura Y."/>
            <person name="Togiya S."/>
            <person name="Komai F."/>
            <person name="Hara R."/>
            <person name="Takeuchi K."/>
            <person name="Arita M."/>
            <person name="Imose N."/>
            <person name="Musashino K."/>
            <person name="Yuuki H."/>
            <person name="Oshima A."/>
            <person name="Sasaki N."/>
            <person name="Aotsuka S."/>
            <person name="Yoshikawa Y."/>
            <person name="Matsunawa H."/>
            <person name="Ichihara T."/>
            <person name="Shiohata N."/>
            <person name="Sano S."/>
            <person name="Moriya S."/>
            <person name="Momiyama H."/>
            <person name="Satoh N."/>
            <person name="Takami S."/>
            <person name="Terashima Y."/>
            <person name="Suzuki O."/>
            <person name="Nakagawa S."/>
            <person name="Senoh A."/>
            <person name="Mizoguchi H."/>
            <person name="Goto Y."/>
            <person name="Shimizu F."/>
            <person name="Wakebe H."/>
            <person name="Hishigaki H."/>
            <person name="Watanabe T."/>
            <person name="Sugiyama A."/>
            <person name="Takemoto M."/>
            <person name="Kawakami B."/>
            <person name="Yamazaki M."/>
            <person name="Watanabe K."/>
            <person name="Kumagai A."/>
            <person name="Itakura S."/>
            <person name="Fukuzumi Y."/>
            <person name="Fujimori Y."/>
            <person name="Komiyama M."/>
            <person name="Tashiro H."/>
            <person name="Tanigami A."/>
            <person name="Fujiwara T."/>
            <person name="Ono T."/>
            <person name="Yamada K."/>
            <person name="Fujii Y."/>
            <person name="Ozaki K."/>
            <person name="Hirao M."/>
            <person name="Ohmori Y."/>
            <person name="Kawabata A."/>
            <person name="Hikiji T."/>
            <person name="Kobatake N."/>
            <person name="Inagaki H."/>
            <person name="Ikema Y."/>
            <person name="Okamoto S."/>
            <person name="Okitani R."/>
            <person name="Kawakami T."/>
            <person name="Noguchi S."/>
            <person name="Itoh T."/>
            <person name="Shigeta K."/>
            <person name="Senba T."/>
            <person name="Matsumura K."/>
            <person name="Nakajima Y."/>
            <person name="Mizuno T."/>
            <person name="Morinaga M."/>
            <person name="Sasaki M."/>
            <person name="Togashi T."/>
            <person name="Oyama M."/>
            <person name="Hata H."/>
            <person name="Watanabe M."/>
            <person name="Komatsu T."/>
            <person name="Mizushima-Sugano J."/>
            <person name="Satoh T."/>
            <person name="Shirai Y."/>
            <person name="Takahashi Y."/>
            <person name="Nakagawa K."/>
            <person name="Okumura K."/>
            <person name="Nagase T."/>
            <person name="Nomura N."/>
            <person name="Kikuchi H."/>
            <person name="Masuho Y."/>
            <person name="Yamashita R."/>
            <person name="Nakai K."/>
            <person name="Yada T."/>
            <person name="Nakamura Y."/>
            <person name="Ohara O."/>
            <person name="Isogai T."/>
            <person name="Sugano S."/>
        </authorList>
    </citation>
    <scope>NUCLEOTIDE SEQUENCE [LARGE SCALE MRNA] (ISOFORM 2)</scope>
    <source>
        <tissue>Tongue</tissue>
    </source>
</reference>
<reference key="3">
    <citation type="journal article" date="2007" name="BMC Genomics">
        <title>The full-ORF clone resource of the German cDNA consortium.</title>
        <authorList>
            <person name="Bechtel S."/>
            <person name="Rosenfelder H."/>
            <person name="Duda A."/>
            <person name="Schmidt C.P."/>
            <person name="Ernst U."/>
            <person name="Wellenreuther R."/>
            <person name="Mehrle A."/>
            <person name="Schuster C."/>
            <person name="Bahr A."/>
            <person name="Bloecker H."/>
            <person name="Heubner D."/>
            <person name="Hoerlein A."/>
            <person name="Michel G."/>
            <person name="Wedler H."/>
            <person name="Koehrer K."/>
            <person name="Ottenwaelder B."/>
            <person name="Poustka A."/>
            <person name="Wiemann S."/>
            <person name="Schupp I."/>
        </authorList>
    </citation>
    <scope>NUCLEOTIDE SEQUENCE [LARGE SCALE MRNA] (ISOFORM 1)</scope>
    <scope>VARIANT GLY-419</scope>
    <source>
        <tissue>Cervix</tissue>
    </source>
</reference>
<reference key="4">
    <citation type="journal article" date="2004" name="Nature">
        <title>The DNA sequence and biology of human chromosome 19.</title>
        <authorList>
            <person name="Grimwood J."/>
            <person name="Gordon L.A."/>
            <person name="Olsen A.S."/>
            <person name="Terry A."/>
            <person name="Schmutz J."/>
            <person name="Lamerdin J.E."/>
            <person name="Hellsten U."/>
            <person name="Goodstein D."/>
            <person name="Couronne O."/>
            <person name="Tran-Gyamfi M."/>
            <person name="Aerts A."/>
            <person name="Altherr M."/>
            <person name="Ashworth L."/>
            <person name="Bajorek E."/>
            <person name="Black S."/>
            <person name="Branscomb E."/>
            <person name="Caenepeel S."/>
            <person name="Carrano A.V."/>
            <person name="Caoile C."/>
            <person name="Chan Y.M."/>
            <person name="Christensen M."/>
            <person name="Cleland C.A."/>
            <person name="Copeland A."/>
            <person name="Dalin E."/>
            <person name="Dehal P."/>
            <person name="Denys M."/>
            <person name="Detter J.C."/>
            <person name="Escobar J."/>
            <person name="Flowers D."/>
            <person name="Fotopulos D."/>
            <person name="Garcia C."/>
            <person name="Georgescu A.M."/>
            <person name="Glavina T."/>
            <person name="Gomez M."/>
            <person name="Gonzales E."/>
            <person name="Groza M."/>
            <person name="Hammon N."/>
            <person name="Hawkins T."/>
            <person name="Haydu L."/>
            <person name="Ho I."/>
            <person name="Huang W."/>
            <person name="Israni S."/>
            <person name="Jett J."/>
            <person name="Kadner K."/>
            <person name="Kimball H."/>
            <person name="Kobayashi A."/>
            <person name="Larionov V."/>
            <person name="Leem S.-H."/>
            <person name="Lopez F."/>
            <person name="Lou Y."/>
            <person name="Lowry S."/>
            <person name="Malfatti S."/>
            <person name="Martinez D."/>
            <person name="McCready P.M."/>
            <person name="Medina C."/>
            <person name="Morgan J."/>
            <person name="Nelson K."/>
            <person name="Nolan M."/>
            <person name="Ovcharenko I."/>
            <person name="Pitluck S."/>
            <person name="Pollard M."/>
            <person name="Popkie A.P."/>
            <person name="Predki P."/>
            <person name="Quan G."/>
            <person name="Ramirez L."/>
            <person name="Rash S."/>
            <person name="Retterer J."/>
            <person name="Rodriguez A."/>
            <person name="Rogers S."/>
            <person name="Salamov A."/>
            <person name="Salazar A."/>
            <person name="She X."/>
            <person name="Smith D."/>
            <person name="Slezak T."/>
            <person name="Solovyev V."/>
            <person name="Thayer N."/>
            <person name="Tice H."/>
            <person name="Tsai M."/>
            <person name="Ustaszewska A."/>
            <person name="Vo N."/>
            <person name="Wagner M."/>
            <person name="Wheeler J."/>
            <person name="Wu K."/>
            <person name="Xie G."/>
            <person name="Yang J."/>
            <person name="Dubchak I."/>
            <person name="Furey T.S."/>
            <person name="DeJong P."/>
            <person name="Dickson M."/>
            <person name="Gordon D."/>
            <person name="Eichler E.E."/>
            <person name="Pennacchio L.A."/>
            <person name="Richardson P."/>
            <person name="Stubbs L."/>
            <person name="Rokhsar D.S."/>
            <person name="Myers R.M."/>
            <person name="Rubin E.M."/>
            <person name="Lucas S.M."/>
        </authorList>
    </citation>
    <scope>NUCLEOTIDE SEQUENCE [LARGE SCALE GENOMIC DNA]</scope>
</reference>
<reference key="5">
    <citation type="journal article" date="2004" name="Genome Res.">
        <title>The status, quality, and expansion of the NIH full-length cDNA project: the Mammalian Gene Collection (MGC).</title>
        <authorList>
            <consortium name="The MGC Project Team"/>
        </authorList>
    </citation>
    <scope>NUCLEOTIDE SEQUENCE [LARGE SCALE MRNA] (ISOFORM 1)</scope>
    <source>
        <tissue>Skin</tissue>
    </source>
</reference>
<reference key="6">
    <citation type="journal article" date="2002" name="J. Biol. Chem.">
        <title>Suprabasin, a novel epidermal differentiation marker and potential cornified envelope precursor.</title>
        <authorList>
            <person name="Park G.T."/>
            <person name="Lim S.E."/>
            <person name="Jang S.-I."/>
            <person name="Morasso M.I."/>
        </authorList>
    </citation>
    <scope>TISSUE SPECIFICITY</scope>
    <scope>INDUCTION</scope>
</reference>
<reference key="7">
    <citation type="journal article" date="2014" name="J. Proteomics">
        <title>An enzyme assisted RP-RPLC approach for in-depth analysis of human liver phosphoproteome.</title>
        <authorList>
            <person name="Bian Y."/>
            <person name="Song C."/>
            <person name="Cheng K."/>
            <person name="Dong M."/>
            <person name="Wang F."/>
            <person name="Huang J."/>
            <person name="Sun D."/>
            <person name="Wang L."/>
            <person name="Ye M."/>
            <person name="Zou H."/>
        </authorList>
    </citation>
    <scope>IDENTIFICATION BY MASS SPECTROMETRY [LARGE SCALE ANALYSIS]</scope>
    <source>
        <tissue>Liver</tissue>
    </source>
</reference>
<feature type="signal peptide" evidence="2">
    <location>
        <begin position="1"/>
        <end position="25"/>
    </location>
</feature>
<feature type="chain" id="PRO_0000317120" description="Suprabasin">
    <location>
        <begin position="26"/>
        <end position="590"/>
    </location>
</feature>
<feature type="region of interest" description="Disordered" evidence="3">
    <location>
        <begin position="182"/>
        <end position="213"/>
    </location>
</feature>
<feature type="region of interest" description="Disordered" evidence="3">
    <location>
        <begin position="242"/>
        <end position="266"/>
    </location>
</feature>
<feature type="region of interest" description="Disordered" evidence="3">
    <location>
        <begin position="297"/>
        <end position="338"/>
    </location>
</feature>
<feature type="region of interest" description="Disordered" evidence="3">
    <location>
        <begin position="545"/>
        <end position="570"/>
    </location>
</feature>
<feature type="compositionally biased region" description="Low complexity" evidence="3">
    <location>
        <begin position="190"/>
        <end position="200"/>
    </location>
</feature>
<feature type="compositionally biased region" description="Low complexity" evidence="3">
    <location>
        <begin position="243"/>
        <end position="254"/>
    </location>
</feature>
<feature type="compositionally biased region" description="Low complexity" evidence="3">
    <location>
        <begin position="297"/>
        <end position="330"/>
    </location>
</feature>
<feature type="compositionally biased region" description="Low complexity" evidence="3">
    <location>
        <begin position="546"/>
        <end position="559"/>
    </location>
</feature>
<feature type="compositionally biased region" description="Polar residues" evidence="3">
    <location>
        <begin position="560"/>
        <end position="570"/>
    </location>
</feature>
<feature type="splice variant" id="VSP_044973" description="In isoform 2." evidence="6 7">
    <location>
        <begin position="125"/>
        <end position="467"/>
    </location>
</feature>
<feature type="sequence variant" id="VAR_069027" description="In dbSNP:rs10775583." evidence="5">
    <original>A</original>
    <variation>G</variation>
    <location>
        <position position="419"/>
    </location>
</feature>
<feature type="sequence conflict" description="In Ref. 3; BX648076." evidence="8" ref="3">
    <original>Q</original>
    <variation>L</variation>
    <location>
        <position position="298"/>
    </location>
</feature>
<feature type="sequence conflict" description="In Ref. 3; BX648076." evidence="8" ref="3">
    <original>V</original>
    <variation>A</variation>
    <location>
        <position position="372"/>
    </location>
</feature>
<feature type="sequence conflict" description="In Ref. 3; BX648076." evidence="8" ref="3">
    <original>Q</original>
    <variation>R</variation>
    <location>
        <position position="406"/>
    </location>
</feature>
<feature type="sequence conflict" description="In Ref. 2; BAF83994." evidence="8" ref="2">
    <original>G</original>
    <variation>W</variation>
    <location>
        <position position="533"/>
    </location>
</feature>
<sequence>MHLARLVGSCSLLLLLGALSGWAASDDPIEKVIEGINRGLSNAEREVGKALDGINSGITHAGREVEKVFNGLSNMGSHTGKELDKGVQGLNHGMDKVAHEINHGIGQAGKEAEKLGHGVNNAAGQVGKEADKLIHHGVHHGANQAGSEAGKFGQGVDNAAGQAGNEAGRFGQGVHHAAGQAGNEAGRFGQGVHHAAGQAGNEAGRFGQGAHHGLSEGWKETEKFGQGIHHAAGQVGKEAEKFGQGAHHAAGQAGNEAGRFGQGVHHGLSEGWKETEKFGQGVHHTAGQVGKEAEKFGQGAHHAAGQAGNEAGRFGQGAHHAAGQAGNEAGRFGQGVHHGLSEGWKETEKFGQGVHHAASQFGKETEKLGHGVHHGVNEAWKEAEKFGQGVHHAASQVGKEEDRVVQGLHHGVSQAGREAGQFGHDIHHTAGQAGKEGDIAVHGVQPGVHEAGKEAGQFGQGVHHTLEQAGKEADKAVQGFHTGVHQAGKEAEKLGQGVNHAADQAGKEVEKLGQGAHHAAGQAGKELQNAHNGVNQASKEANQLLNGNHQSGSSSHQGGATTTPLASGASVNTPFINLPALWRSVANIMP</sequence>
<evidence type="ECO:0000250" key="1"/>
<evidence type="ECO:0000255" key="2"/>
<evidence type="ECO:0000256" key="3">
    <source>
        <dbReference type="SAM" id="MobiDB-lite"/>
    </source>
</evidence>
<evidence type="ECO:0000269" key="4">
    <source>
    </source>
</evidence>
<evidence type="ECO:0000269" key="5">
    <source>
    </source>
</evidence>
<evidence type="ECO:0000303" key="6">
    <source>
    </source>
</evidence>
<evidence type="ECO:0000303" key="7">
    <source>
    </source>
</evidence>
<evidence type="ECO:0000305" key="8"/>
<name>SBSN_HUMAN</name>
<organism>
    <name type="scientific">Homo sapiens</name>
    <name type="common">Human</name>
    <dbReference type="NCBI Taxonomy" id="9606"/>
    <lineage>
        <taxon>Eukaryota</taxon>
        <taxon>Metazoa</taxon>
        <taxon>Chordata</taxon>
        <taxon>Craniata</taxon>
        <taxon>Vertebrata</taxon>
        <taxon>Euteleostomi</taxon>
        <taxon>Mammalia</taxon>
        <taxon>Eutheria</taxon>
        <taxon>Euarchontoglires</taxon>
        <taxon>Primates</taxon>
        <taxon>Haplorrhini</taxon>
        <taxon>Catarrhini</taxon>
        <taxon>Hominidae</taxon>
        <taxon>Homo</taxon>
    </lineage>
</organism>